<name>AKTIP_NEMVE</name>
<accession>A7RRG3</accession>
<organism>
    <name type="scientific">Nematostella vectensis</name>
    <name type="common">Starlet sea anemone</name>
    <dbReference type="NCBI Taxonomy" id="45351"/>
    <lineage>
        <taxon>Eukaryota</taxon>
        <taxon>Metazoa</taxon>
        <taxon>Cnidaria</taxon>
        <taxon>Anthozoa</taxon>
        <taxon>Hexacorallia</taxon>
        <taxon>Actiniaria</taxon>
        <taxon>Edwardsiidae</taxon>
        <taxon>Nematostella</taxon>
    </lineage>
</organism>
<proteinExistence type="inferred from homology"/>
<comment type="similarity">
    <text evidence="1">Belongs to the ubiquitin-conjugating enzyme family. FTS subfamily.</text>
</comment>
<comment type="caution">
    <text evidence="3">Lacks the conserved Cys residue necessary for ubiquitin-conjugating enzyme E2 activity.</text>
</comment>
<keyword id="KW-1185">Reference proteome</keyword>
<protein>
    <recommendedName>
        <fullName>Protein AKTIP homolog</fullName>
    </recommendedName>
    <alternativeName>
        <fullName>Fused toes protein homolog</fullName>
    </alternativeName>
</protein>
<sequence>MLNVTHQLKKKLFLSDLDEKSSSSPHDEKKPGDGREVREEKSKRKALPALPSPAEEKSMNLSIARQRSPSGSSPEQVKAYGPFFLEYTLMAEYNQLRSQRLPGVYVLPAAKSALVWYGVIFIRMGLYQDGIFKFQMTIPENFPDGDCPTLVFKPTIFHPVVNIETGELDVRRAFPRWRRNINHLWQVLLYAKRIFYKIDSRDPLNPEAAEMYQNDKDRYKQKVNECLRRCHNELHLAVADDPHAIKFVELTPEKQDDVKNQIIESQSKPECLPTANAHKSGLSWMKKGGAIFSKEES</sequence>
<reference key="1">
    <citation type="journal article" date="2007" name="Science">
        <title>Sea anemone genome reveals ancestral eumetazoan gene repertoire and genomic organization.</title>
        <authorList>
            <person name="Putnam N.H."/>
            <person name="Srivastava M."/>
            <person name="Hellsten U."/>
            <person name="Dirks B."/>
            <person name="Chapman J."/>
            <person name="Salamov A."/>
            <person name="Terry A."/>
            <person name="Shapiro H."/>
            <person name="Lindquist E."/>
            <person name="Kapitonov V.V."/>
            <person name="Jurka J."/>
            <person name="Genikhovich G."/>
            <person name="Grigoriev I.V."/>
            <person name="Lucas S.M."/>
            <person name="Steele R.E."/>
            <person name="Finnerty J.R."/>
            <person name="Technau U."/>
            <person name="Martindale M.Q."/>
            <person name="Rokhsar D.S."/>
        </authorList>
    </citation>
    <scope>NUCLEOTIDE SEQUENCE [LARGE SCALE GENOMIC DNA]</scope>
    <source>
        <strain>CH2 X CH6</strain>
    </source>
</reference>
<gene>
    <name type="ORF">v1g232160</name>
</gene>
<evidence type="ECO:0000255" key="1">
    <source>
        <dbReference type="PROSITE-ProRule" id="PRU00388"/>
    </source>
</evidence>
<evidence type="ECO:0000256" key="2">
    <source>
        <dbReference type="SAM" id="MobiDB-lite"/>
    </source>
</evidence>
<evidence type="ECO:0000305" key="3"/>
<dbReference type="EMBL" id="DS469531">
    <property type="protein sequence ID" value="EDO45944.1"/>
    <property type="molecule type" value="Genomic_DNA"/>
</dbReference>
<dbReference type="SMR" id="A7RRG3"/>
<dbReference type="FunCoup" id="A7RRG3">
    <property type="interactions" value="248"/>
</dbReference>
<dbReference type="STRING" id="45351.A7RRG3"/>
<dbReference type="EnsemblMetazoa" id="EDO45944">
    <property type="protein sequence ID" value="EDO45944"/>
    <property type="gene ID" value="NEMVEDRAFT_v1g232160"/>
</dbReference>
<dbReference type="KEGG" id="nve:5518028"/>
<dbReference type="eggNOG" id="KOG0429">
    <property type="taxonomic scope" value="Eukaryota"/>
</dbReference>
<dbReference type="HOGENOM" id="CLU_083049_0_0_1"/>
<dbReference type="InParanoid" id="A7RRG3"/>
<dbReference type="OMA" id="LEXSLLA"/>
<dbReference type="OrthoDB" id="5596422at2759"/>
<dbReference type="PhylomeDB" id="A7RRG3"/>
<dbReference type="Proteomes" id="UP000001593">
    <property type="component" value="Unassembled WGS sequence"/>
</dbReference>
<dbReference type="CDD" id="cd23814">
    <property type="entry name" value="UEV_AKTIP"/>
    <property type="match status" value="1"/>
</dbReference>
<dbReference type="Gene3D" id="3.10.110.10">
    <property type="entry name" value="Ubiquitin Conjugating Enzyme"/>
    <property type="match status" value="1"/>
</dbReference>
<dbReference type="InterPro" id="IPR050113">
    <property type="entry name" value="Ub_conjugating_enzyme"/>
</dbReference>
<dbReference type="InterPro" id="IPR000608">
    <property type="entry name" value="UBQ-conjugat_E2_core"/>
</dbReference>
<dbReference type="InterPro" id="IPR016135">
    <property type="entry name" value="UBQ-conjugating_enzyme/RWD"/>
</dbReference>
<dbReference type="PANTHER" id="PTHR24067">
    <property type="entry name" value="UBIQUITIN-CONJUGATING ENZYME E2"/>
    <property type="match status" value="1"/>
</dbReference>
<dbReference type="Pfam" id="PF00179">
    <property type="entry name" value="UQ_con"/>
    <property type="match status" value="1"/>
</dbReference>
<dbReference type="SMART" id="SM00212">
    <property type="entry name" value="UBCc"/>
    <property type="match status" value="1"/>
</dbReference>
<dbReference type="SUPFAM" id="SSF54495">
    <property type="entry name" value="UBC-like"/>
    <property type="match status" value="1"/>
</dbReference>
<dbReference type="PROSITE" id="PS50127">
    <property type="entry name" value="UBC_2"/>
    <property type="match status" value="1"/>
</dbReference>
<feature type="chain" id="PRO_0000379025" description="Protein AKTIP homolog">
    <location>
        <begin position="1"/>
        <end position="297"/>
    </location>
</feature>
<feature type="domain" description="UBC core" evidence="1">
    <location>
        <begin position="84"/>
        <end position="232"/>
    </location>
</feature>
<feature type="region of interest" description="Disordered" evidence="2">
    <location>
        <begin position="13"/>
        <end position="75"/>
    </location>
</feature>
<feature type="compositionally biased region" description="Basic and acidic residues" evidence="2">
    <location>
        <begin position="17"/>
        <end position="42"/>
    </location>
</feature>
<feature type="compositionally biased region" description="Polar residues" evidence="2">
    <location>
        <begin position="59"/>
        <end position="75"/>
    </location>
</feature>